<gene>
    <name evidence="7" type="primary">PT5</name>
</gene>
<reference key="1">
    <citation type="journal article" date="2008" name="Plant J.">
        <title>A transgenic dTph1 insertional mutagenesis system for forward genetics in mycorrhizal phosphate transport of Petunia.</title>
        <authorList>
            <person name="Wegmueller S."/>
            <person name="Svistoonoff S."/>
            <person name="Reinhardt D."/>
            <person name="Stuurman J."/>
            <person name="Amrhein N."/>
            <person name="Bucher M."/>
        </authorList>
    </citation>
    <scope>NUCLEOTIDE SEQUENCE [GENOMIC DNA]</scope>
    <scope>INDUCTION BY ARBUSCULAR MYCORRHIZAL FUNGI</scope>
    <scope>TISSUE SPECIFICITY</scope>
    <source>
        <strain>cv. W115</strain>
        <strain>cv. W138</strain>
    </source>
</reference>
<reference key="2">
    <citation type="journal article" date="2015" name="Plant Physiol.">
        <title>The Petunia GRAS transcription factor ATA/RAM1 regulates symbiotic gene expression and fungal morphogenesis in arbuscular mycorrhiza.</title>
        <authorList>
            <person name="Rich M.K."/>
            <person name="Schorderet M."/>
            <person name="Bapaume L."/>
            <person name="Falquet L."/>
            <person name="Morel P."/>
            <person name="Vandenbussche M."/>
            <person name="Reinhardt D."/>
        </authorList>
    </citation>
    <scope>INDUCTION BY RAM1 AND RHIZOPHAGUS IRREGULARIS</scope>
    <source>
        <strain>cv. W138</strain>
    </source>
</reference>
<dbReference type="EMBL" id="EU532764">
    <property type="protein sequence ID" value="ACB37442.1"/>
    <property type="molecule type" value="Genomic_DNA"/>
</dbReference>
<dbReference type="SMR" id="B2CPI7"/>
<dbReference type="GlyCosmos" id="B2CPI7">
    <property type="glycosylation" value="2 sites, No reported glycans"/>
</dbReference>
<dbReference type="GO" id="GO:0005886">
    <property type="term" value="C:plasma membrane"/>
    <property type="evidence" value="ECO:0007669"/>
    <property type="project" value="UniProtKB-SubCell"/>
</dbReference>
<dbReference type="GO" id="GO:0015293">
    <property type="term" value="F:symporter activity"/>
    <property type="evidence" value="ECO:0007669"/>
    <property type="project" value="UniProtKB-KW"/>
</dbReference>
<dbReference type="GO" id="GO:0006817">
    <property type="term" value="P:phosphate ion transport"/>
    <property type="evidence" value="ECO:0007669"/>
    <property type="project" value="UniProtKB-KW"/>
</dbReference>
<dbReference type="GO" id="GO:0009610">
    <property type="term" value="P:response to symbiotic fungus"/>
    <property type="evidence" value="ECO:0000270"/>
    <property type="project" value="UniProtKB"/>
</dbReference>
<dbReference type="CDD" id="cd17364">
    <property type="entry name" value="MFS_PhT"/>
    <property type="match status" value="1"/>
</dbReference>
<dbReference type="FunFam" id="1.20.1250.20:FF:000175">
    <property type="entry name" value="Inorganic phosphate transporter 1-6"/>
    <property type="match status" value="1"/>
</dbReference>
<dbReference type="Gene3D" id="1.20.1250.20">
    <property type="entry name" value="MFS general substrate transporter like domains"/>
    <property type="match status" value="1"/>
</dbReference>
<dbReference type="InterPro" id="IPR020846">
    <property type="entry name" value="MFS_dom"/>
</dbReference>
<dbReference type="InterPro" id="IPR005828">
    <property type="entry name" value="MFS_sugar_transport-like"/>
</dbReference>
<dbReference type="InterPro" id="IPR036259">
    <property type="entry name" value="MFS_trans_sf"/>
</dbReference>
<dbReference type="PANTHER" id="PTHR24064">
    <property type="entry name" value="SOLUTE CARRIER FAMILY 22 MEMBER"/>
    <property type="match status" value="1"/>
</dbReference>
<dbReference type="Pfam" id="PF00083">
    <property type="entry name" value="Sugar_tr"/>
    <property type="match status" value="1"/>
</dbReference>
<dbReference type="SUPFAM" id="SSF103473">
    <property type="entry name" value="MFS general substrate transporter"/>
    <property type="match status" value="1"/>
</dbReference>
<dbReference type="PROSITE" id="PS50850">
    <property type="entry name" value="MFS"/>
    <property type="match status" value="1"/>
</dbReference>
<organism>
    <name type="scientific">Petunia hybrida</name>
    <name type="common">Petunia</name>
    <dbReference type="NCBI Taxonomy" id="4102"/>
    <lineage>
        <taxon>Eukaryota</taxon>
        <taxon>Viridiplantae</taxon>
        <taxon>Streptophyta</taxon>
        <taxon>Embryophyta</taxon>
        <taxon>Tracheophyta</taxon>
        <taxon>Spermatophyta</taxon>
        <taxon>Magnoliopsida</taxon>
        <taxon>eudicotyledons</taxon>
        <taxon>Gunneridae</taxon>
        <taxon>Pentapetalae</taxon>
        <taxon>asterids</taxon>
        <taxon>lamiids</taxon>
        <taxon>Solanales</taxon>
        <taxon>Solanaceae</taxon>
        <taxon>Petunioideae</taxon>
        <taxon>Petunia</taxon>
    </lineage>
</organism>
<accession>B2CPI7</accession>
<sequence length="529" mass="58914">MASNNLNVLNALDTAHTQWYHVTAVVIAGMGFFTDAYDLFCISTISKLLGRLYYYDPHTHAPGKLPHTVNNWVTGVALVGTLTGQLVFGWLGDKLGRKKVYGLTLILMVICALSSGLSFGYSRKVVIGTLCFFRFWLGFGIGGDYPLSATIMSEYANKRTRGAFIAAVFAMQGVGIIFAGLVLMTVSKVFLMRYAGKAFSTDEVFSTEPEADYVWRIVLMLGALPALLTYYWRMKMPETGRYTAIIEGNAKQAAIDMGKVLEIEIQAEGEKLAKFKSANDYSLLSNEFFQRHGLHLIGTMSTWFLLDIAFYSQNLTQKDIFPTMGLVSDAKSISALREMFETSRAMFVIALLGTFPGYWFTVFFIEKIGRFKIQLMGFFMMSIFMAIIGVRYDYLKTKDHKWTFAALYGLTFFFANSGPNSTTFVLPAELFPTRVRSTCHALSAASGKAGAMVSAFGVQQYTQDGEVHKIKKAMLFLAFTNMVGFCCTFLVTETKGRSLEEISGEDENQNETKMKGRPVSGGHQDDGWD</sequence>
<protein>
    <recommendedName>
        <fullName evidence="7">Low affinity inorganic phosphate transporter 5</fullName>
        <shortName evidence="7">PhPT5</shortName>
        <shortName evidence="8">PhPht1;5</shortName>
    </recommendedName>
    <alternativeName>
        <fullName evidence="8">Arbuscular mycorrhiza-induced phosphate transporter PT5</fullName>
        <shortName evidence="8">AM-induced phosphate transporter PT5</shortName>
    </alternativeName>
    <alternativeName>
        <fullName evidence="8">H(+)/Pi cotransporter PT5</fullName>
    </alternativeName>
</protein>
<name>PHT15_PETHY</name>
<comment type="function">
    <text evidence="9">Low-affinity transporter for external inorganic phosphate (Pi) probably involved in the acquisition of phosphate released by arbuscular mycorrhizal (AM) fungi during AM symbiosis.</text>
</comment>
<comment type="catalytic activity">
    <reaction evidence="1">
        <text>phosphate(in) + H(+)(in) = phosphate(out) + H(+)(out)</text>
        <dbReference type="Rhea" id="RHEA:29939"/>
        <dbReference type="ChEBI" id="CHEBI:15378"/>
        <dbReference type="ChEBI" id="CHEBI:43474"/>
    </reaction>
    <physiologicalReaction direction="right-to-left" evidence="1">
        <dbReference type="Rhea" id="RHEA:29941"/>
    </physiologicalReaction>
</comment>
<comment type="subcellular location">
    <subcellularLocation>
        <location evidence="1">Cell membrane</location>
        <topology evidence="2">Multi-pass membrane protein</topology>
    </subcellularLocation>
    <text evidence="1">Present on the periarbuscular membrane in cells containing arbuscules during arbuscular mycorrhizal (AM) symbiosis with AM fungi.</text>
</comment>
<comment type="tissue specificity">
    <text evidence="5">Expressed at low levels in non-mycorrhized roots.</text>
</comment>
<comment type="induction">
    <text evidence="5 6">Regulated positively by RAM1 during arbuscular mycorrhiza (AM) formation after inoculation with AM fungi (e.g. Rhizophagus irregularis and Glomus intraradices).</text>
</comment>
<comment type="miscellaneous">
    <text evidence="8">Although related to the sugar transporter family, it does not transport sugars.</text>
</comment>
<comment type="similarity">
    <text evidence="8">Belongs to the major facilitator superfamily. Phosphate:H(+) symporter (TC 2.A.1.9) family.</text>
</comment>
<evidence type="ECO:0000250" key="1">
    <source>
        <dbReference type="UniProtKB" id="Q8GSG4"/>
    </source>
</evidence>
<evidence type="ECO:0000255" key="2"/>
<evidence type="ECO:0000255" key="3">
    <source>
        <dbReference type="PROSITE-ProRule" id="PRU00498"/>
    </source>
</evidence>
<evidence type="ECO:0000256" key="4">
    <source>
        <dbReference type="SAM" id="MobiDB-lite"/>
    </source>
</evidence>
<evidence type="ECO:0000269" key="5">
    <source>
    </source>
</evidence>
<evidence type="ECO:0000269" key="6">
    <source>
    </source>
</evidence>
<evidence type="ECO:0000303" key="7">
    <source>
    </source>
</evidence>
<evidence type="ECO:0000305" key="8"/>
<evidence type="ECO:0000305" key="9">
    <source>
    </source>
</evidence>
<feature type="chain" id="PRO_0000450039" description="Low affinity inorganic phosphate transporter 5">
    <location>
        <begin position="1"/>
        <end position="529"/>
    </location>
</feature>
<feature type="topological domain" description="Cytoplasmic" evidence="8">
    <location>
        <begin position="1"/>
        <end position="21"/>
    </location>
</feature>
<feature type="transmembrane region" description="Helical; Name=1" evidence="2">
    <location>
        <begin position="22"/>
        <end position="42"/>
    </location>
</feature>
<feature type="topological domain" description="Extracellular" evidence="8">
    <location>
        <begin position="43"/>
        <end position="71"/>
    </location>
</feature>
<feature type="transmembrane region" description="Helical; Name=2" evidence="2">
    <location>
        <begin position="72"/>
        <end position="92"/>
    </location>
</feature>
<feature type="topological domain" description="Cytoplasmic" evidence="8">
    <location>
        <begin position="93"/>
        <end position="99"/>
    </location>
</feature>
<feature type="transmembrane region" description="Helical; Name=3" evidence="2">
    <location>
        <begin position="100"/>
        <end position="120"/>
    </location>
</feature>
<feature type="topological domain" description="Extracellular" evidence="8">
    <location>
        <begin position="121"/>
        <end position="124"/>
    </location>
</feature>
<feature type="transmembrane region" description="Helical; Name=4" evidence="2">
    <location>
        <begin position="125"/>
        <end position="145"/>
    </location>
</feature>
<feature type="topological domain" description="Cytoplasmic" evidence="8">
    <location>
        <begin position="146"/>
        <end position="163"/>
    </location>
</feature>
<feature type="transmembrane region" description="Helical; Name=5" evidence="2">
    <location>
        <begin position="164"/>
        <end position="184"/>
    </location>
</feature>
<feature type="topological domain" description="Extracellular" evidence="8">
    <location>
        <begin position="185"/>
        <end position="211"/>
    </location>
</feature>
<feature type="transmembrane region" description="Helical; Name=6" evidence="2">
    <location>
        <begin position="212"/>
        <end position="232"/>
    </location>
</feature>
<feature type="topological domain" description="Cytoplasmic" evidence="8">
    <location>
        <begin position="233"/>
        <end position="291"/>
    </location>
</feature>
<feature type="transmembrane region" description="Helical; Name=7" evidence="2">
    <location>
        <begin position="292"/>
        <end position="312"/>
    </location>
</feature>
<feature type="topological domain" description="Extracellular" evidence="8">
    <location>
        <begin position="313"/>
        <end position="344"/>
    </location>
</feature>
<feature type="transmembrane region" description="Helical; Name=8" evidence="2">
    <location>
        <begin position="345"/>
        <end position="365"/>
    </location>
</feature>
<feature type="topological domain" description="Cytoplasmic" evidence="8">
    <location>
        <begin position="366"/>
        <end position="374"/>
    </location>
</feature>
<feature type="transmembrane region" description="Helical; Name=9" evidence="2">
    <location>
        <begin position="375"/>
        <end position="395"/>
    </location>
</feature>
<feature type="topological domain" description="Extracellular" evidence="8">
    <location>
        <begin position="396"/>
        <end position="405"/>
    </location>
</feature>
<feature type="transmembrane region" description="Helical; Name=10" evidence="2">
    <location>
        <begin position="406"/>
        <end position="426"/>
    </location>
</feature>
<feature type="topological domain" description="Cytoplasmic" evidence="8">
    <location>
        <begin position="427"/>
        <end position="472"/>
    </location>
</feature>
<feature type="transmembrane region" description="Helical; Name=11" evidence="2">
    <location>
        <begin position="473"/>
        <end position="493"/>
    </location>
</feature>
<feature type="topological domain" description="Extracellular" evidence="8">
    <location>
        <begin position="494"/>
        <end position="529"/>
    </location>
</feature>
<feature type="region of interest" description="Disordered" evidence="4">
    <location>
        <begin position="500"/>
        <end position="529"/>
    </location>
</feature>
<feature type="glycosylation site" description="N-linked (GlcNAc...) asparagine" evidence="3">
    <location>
        <position position="314"/>
    </location>
</feature>
<feature type="glycosylation site" description="N-linked (GlcNAc...) asparagine" evidence="3">
    <location>
        <position position="510"/>
    </location>
</feature>
<proteinExistence type="evidence at transcript level"/>
<keyword id="KW-1003">Cell membrane</keyword>
<keyword id="KW-0325">Glycoprotein</keyword>
<keyword id="KW-0472">Membrane</keyword>
<keyword id="KW-0592">Phosphate transport</keyword>
<keyword id="KW-0769">Symport</keyword>
<keyword id="KW-0812">Transmembrane</keyword>
<keyword id="KW-1133">Transmembrane helix</keyword>
<keyword id="KW-0813">Transport</keyword>